<dbReference type="EMBL" id="BA000016">
    <property type="protein sequence ID" value="BAB82109.1"/>
    <property type="molecule type" value="Genomic_DNA"/>
</dbReference>
<dbReference type="RefSeq" id="WP_003454311.1">
    <property type="nucleotide sequence ID" value="NC_003366.1"/>
</dbReference>
<dbReference type="SMR" id="Q8XHS5"/>
<dbReference type="STRING" id="195102.gene:10491720"/>
<dbReference type="GeneID" id="93001011"/>
<dbReference type="KEGG" id="cpe:CPE2403"/>
<dbReference type="HOGENOM" id="CLU_037562_3_2_9"/>
<dbReference type="Proteomes" id="UP000000818">
    <property type="component" value="Chromosome"/>
</dbReference>
<dbReference type="GO" id="GO:1990904">
    <property type="term" value="C:ribonucleoprotein complex"/>
    <property type="evidence" value="ECO:0007669"/>
    <property type="project" value="UniProtKB-KW"/>
</dbReference>
<dbReference type="GO" id="GO:0005840">
    <property type="term" value="C:ribosome"/>
    <property type="evidence" value="ECO:0007669"/>
    <property type="project" value="UniProtKB-KW"/>
</dbReference>
<dbReference type="GO" id="GO:0019843">
    <property type="term" value="F:rRNA binding"/>
    <property type="evidence" value="ECO:0007669"/>
    <property type="project" value="UniProtKB-UniRule"/>
</dbReference>
<dbReference type="GO" id="GO:0003735">
    <property type="term" value="F:structural constituent of ribosome"/>
    <property type="evidence" value="ECO:0007669"/>
    <property type="project" value="InterPro"/>
</dbReference>
<dbReference type="GO" id="GO:0006412">
    <property type="term" value="P:translation"/>
    <property type="evidence" value="ECO:0007669"/>
    <property type="project" value="UniProtKB-UniRule"/>
</dbReference>
<dbReference type="FunFam" id="3.30.70.330:FF:000001">
    <property type="entry name" value="50S ribosomal protein L23"/>
    <property type="match status" value="1"/>
</dbReference>
<dbReference type="Gene3D" id="3.30.70.330">
    <property type="match status" value="1"/>
</dbReference>
<dbReference type="HAMAP" id="MF_01369_B">
    <property type="entry name" value="Ribosomal_uL23_B"/>
    <property type="match status" value="1"/>
</dbReference>
<dbReference type="InterPro" id="IPR012677">
    <property type="entry name" value="Nucleotide-bd_a/b_plait_sf"/>
</dbReference>
<dbReference type="InterPro" id="IPR013025">
    <property type="entry name" value="Ribosomal_uL23-like"/>
</dbReference>
<dbReference type="InterPro" id="IPR012678">
    <property type="entry name" value="Ribosomal_uL23/eL15/eS24_sf"/>
</dbReference>
<dbReference type="InterPro" id="IPR001014">
    <property type="entry name" value="Ribosomal_uL23_CS"/>
</dbReference>
<dbReference type="NCBIfam" id="NF004363">
    <property type="entry name" value="PRK05738.2-4"/>
    <property type="match status" value="1"/>
</dbReference>
<dbReference type="NCBIfam" id="NF004366">
    <property type="entry name" value="PRK05738.3-2"/>
    <property type="match status" value="1"/>
</dbReference>
<dbReference type="PANTHER" id="PTHR11620">
    <property type="entry name" value="60S RIBOSOMAL PROTEIN L23A"/>
    <property type="match status" value="1"/>
</dbReference>
<dbReference type="Pfam" id="PF00276">
    <property type="entry name" value="Ribosomal_L23"/>
    <property type="match status" value="1"/>
</dbReference>
<dbReference type="SUPFAM" id="SSF54189">
    <property type="entry name" value="Ribosomal proteins S24e, L23 and L15e"/>
    <property type="match status" value="1"/>
</dbReference>
<dbReference type="PROSITE" id="PS00050">
    <property type="entry name" value="RIBOSOMAL_L23"/>
    <property type="match status" value="1"/>
</dbReference>
<protein>
    <recommendedName>
        <fullName evidence="1">Large ribosomal subunit protein uL23</fullName>
    </recommendedName>
    <alternativeName>
        <fullName evidence="2">50S ribosomal protein L23</fullName>
    </alternativeName>
</protein>
<reference key="1">
    <citation type="journal article" date="2002" name="Proc. Natl. Acad. Sci. U.S.A.">
        <title>Complete genome sequence of Clostridium perfringens, an anaerobic flesh-eater.</title>
        <authorList>
            <person name="Shimizu T."/>
            <person name="Ohtani K."/>
            <person name="Hirakawa H."/>
            <person name="Ohshima K."/>
            <person name="Yamashita A."/>
            <person name="Shiba T."/>
            <person name="Ogasawara N."/>
            <person name="Hattori M."/>
            <person name="Kuhara S."/>
            <person name="Hayashi H."/>
        </authorList>
    </citation>
    <scope>NUCLEOTIDE SEQUENCE [LARGE SCALE GENOMIC DNA]</scope>
    <source>
        <strain>13 / Type A</strain>
    </source>
</reference>
<comment type="function">
    <text evidence="1">One of the early assembly proteins it binds 23S rRNA. One of the proteins that surrounds the polypeptide exit tunnel on the outside of the ribosome. Forms the main docking site for trigger factor binding to the ribosome.</text>
</comment>
<comment type="subunit">
    <text evidence="1">Part of the 50S ribosomal subunit. Contacts protein L29, and trigger factor when it is bound to the ribosome.</text>
</comment>
<comment type="similarity">
    <text evidence="1">Belongs to the universal ribosomal protein uL23 family.</text>
</comment>
<keyword id="KW-1185">Reference proteome</keyword>
<keyword id="KW-0687">Ribonucleoprotein</keyword>
<keyword id="KW-0689">Ribosomal protein</keyword>
<keyword id="KW-0694">RNA-binding</keyword>
<keyword id="KW-0699">rRNA-binding</keyword>
<feature type="chain" id="PRO_0000272732" description="Large ribosomal subunit protein uL23">
    <location>
        <begin position="1"/>
        <end position="97"/>
    </location>
</feature>
<gene>
    <name evidence="1" type="primary">rplW</name>
    <name type="ordered locus">CPE2403</name>
</gene>
<name>RL23_CLOPE</name>
<organism>
    <name type="scientific">Clostridium perfringens (strain 13 / Type A)</name>
    <dbReference type="NCBI Taxonomy" id="195102"/>
    <lineage>
        <taxon>Bacteria</taxon>
        <taxon>Bacillati</taxon>
        <taxon>Bacillota</taxon>
        <taxon>Clostridia</taxon>
        <taxon>Eubacteriales</taxon>
        <taxon>Clostridiaceae</taxon>
        <taxon>Clostridium</taxon>
    </lineage>
</organism>
<evidence type="ECO:0000255" key="1">
    <source>
        <dbReference type="HAMAP-Rule" id="MF_01369"/>
    </source>
</evidence>
<evidence type="ECO:0000305" key="2"/>
<proteinExistence type="inferred from homology"/>
<accession>Q8XHS5</accession>
<sequence length="97" mass="10957">MKLTSHDIIRKPVITEKSMAAMAENKYTFIVHMAANKVQIKRAVEEVFNVKVADVKTMRFEGKTKRVGVHIGKRADFKKAVITLAEGSSIEFFEGMQ</sequence>